<sequence length="483" mass="55953">MLTLDTLNVMLAVSEEGLIEEMIIALLASPQLAVFFEKFPRLKAAITDDVPRWREALRSRLKDARVPPELTEEVMCYQQSQLLSTPQFIVQLPQILDLLHRLNSPWAEQARQLVDANSTITSALHTLFLQRWRLSLIVQATTLNQQLLEEEREQLLSEVQERMTLSGQLEPILADNNTAAGRLWDMSAGQLKRGDYQLIVKYGEFLNEQPELKRLAEQLGRSREAKSIPRNDAQMETFRTMVREPATVPEQVDGLQQSDDILRLLPPELATLGITELEYEFYRRLVEKQLLTYRLHGESWREKMIERPVVHKDYDEQPRGPFIVCVDTSGSMGGFNEQCAKAFCLALMRIALAENRRCYIMLFSTEIVRYELSGPQGIEQAIRFLSQQFRGGTDLASCFRAIMERLQSREWFDADAVVISDFIAQRLPDDVTSKVKELQRIHQHRFHAVAMSAHGKPGIMRIFDHIWRFDTGMRSRLLRRWRR</sequence>
<feature type="chain" id="PRO_1000069608" description="Regulatory protein ViaA">
    <location>
        <begin position="1"/>
        <end position="483"/>
    </location>
</feature>
<evidence type="ECO:0000255" key="1">
    <source>
        <dbReference type="HAMAP-Rule" id="MF_01626"/>
    </source>
</evidence>
<gene>
    <name evidence="1" type="primary">viaA</name>
    <name type="ordered locus">ECP_3944</name>
</gene>
<name>VIAA_ECOL5</name>
<proteinExistence type="inferred from homology"/>
<comment type="function">
    <text evidence="1">Component of the RavA-ViaA chaperone complex, which may act on the membrane to optimize the function of some of the respiratory chains. ViaA stimulates the ATPase activity of RavA.</text>
</comment>
<comment type="subunit">
    <text evidence="1">Homodimer. Interacts with RavA.</text>
</comment>
<comment type="subcellular location">
    <subcellularLocation>
        <location evidence="1">Cytoplasm</location>
    </subcellularLocation>
</comment>
<comment type="similarity">
    <text evidence="1">Belongs to the ViaA family.</text>
</comment>
<dbReference type="EMBL" id="CP000247">
    <property type="protein sequence ID" value="ABG71915.1"/>
    <property type="molecule type" value="Genomic_DNA"/>
</dbReference>
<dbReference type="RefSeq" id="WP_000956635.1">
    <property type="nucleotide sequence ID" value="NC_008253.1"/>
</dbReference>
<dbReference type="SMR" id="Q0TAW4"/>
<dbReference type="KEGG" id="ecp:ECP_3944"/>
<dbReference type="HOGENOM" id="CLU_022130_0_0_6"/>
<dbReference type="Proteomes" id="UP000009182">
    <property type="component" value="Chromosome"/>
</dbReference>
<dbReference type="GO" id="GO:0005829">
    <property type="term" value="C:cytosol"/>
    <property type="evidence" value="ECO:0007669"/>
    <property type="project" value="TreeGrafter"/>
</dbReference>
<dbReference type="CDD" id="cd01462">
    <property type="entry name" value="VWA_YIEM_type"/>
    <property type="match status" value="1"/>
</dbReference>
<dbReference type="Gene3D" id="3.40.50.410">
    <property type="entry name" value="von Willebrand factor, type A domain"/>
    <property type="match status" value="1"/>
</dbReference>
<dbReference type="HAMAP" id="MF_01626">
    <property type="entry name" value="ViaA"/>
    <property type="match status" value="1"/>
</dbReference>
<dbReference type="InterPro" id="IPR008912">
    <property type="entry name" value="Uncharacterised_CoxE"/>
</dbReference>
<dbReference type="InterPro" id="IPR023481">
    <property type="entry name" value="Uncharacterised_ViaA"/>
</dbReference>
<dbReference type="InterPro" id="IPR002035">
    <property type="entry name" value="VWF_A"/>
</dbReference>
<dbReference type="InterPro" id="IPR036465">
    <property type="entry name" value="vWFA_dom_sf"/>
</dbReference>
<dbReference type="NCBIfam" id="NF008230">
    <property type="entry name" value="PRK10997.1"/>
    <property type="match status" value="1"/>
</dbReference>
<dbReference type="PANTHER" id="PTHR36846">
    <property type="entry name" value="PROTEIN VIAA"/>
    <property type="match status" value="1"/>
</dbReference>
<dbReference type="PANTHER" id="PTHR36846:SF1">
    <property type="entry name" value="PROTEIN VIAA"/>
    <property type="match status" value="1"/>
</dbReference>
<dbReference type="Pfam" id="PF05762">
    <property type="entry name" value="VWA_CoxE"/>
    <property type="match status" value="1"/>
</dbReference>
<dbReference type="SMART" id="SM00327">
    <property type="entry name" value="VWA"/>
    <property type="match status" value="1"/>
</dbReference>
<dbReference type="SUPFAM" id="SSF53300">
    <property type="entry name" value="vWA-like"/>
    <property type="match status" value="1"/>
</dbReference>
<reference key="1">
    <citation type="journal article" date="2006" name="Mol. Microbiol.">
        <title>Role of pathogenicity island-associated integrases in the genome plasticity of uropathogenic Escherichia coli strain 536.</title>
        <authorList>
            <person name="Hochhut B."/>
            <person name="Wilde C."/>
            <person name="Balling G."/>
            <person name="Middendorf B."/>
            <person name="Dobrindt U."/>
            <person name="Brzuszkiewicz E."/>
            <person name="Gottschalk G."/>
            <person name="Carniel E."/>
            <person name="Hacker J."/>
        </authorList>
    </citation>
    <scope>NUCLEOTIDE SEQUENCE [LARGE SCALE GENOMIC DNA]</scope>
    <source>
        <strain>536 / UPEC</strain>
    </source>
</reference>
<protein>
    <recommendedName>
        <fullName evidence="1">Regulatory protein ViaA</fullName>
    </recommendedName>
    <alternativeName>
        <fullName evidence="1">VWA interacting with AAA+ ATPase</fullName>
    </alternativeName>
</protein>
<accession>Q0TAW4</accession>
<keyword id="KW-0143">Chaperone</keyword>
<keyword id="KW-0963">Cytoplasm</keyword>
<organism>
    <name type="scientific">Escherichia coli O6:K15:H31 (strain 536 / UPEC)</name>
    <dbReference type="NCBI Taxonomy" id="362663"/>
    <lineage>
        <taxon>Bacteria</taxon>
        <taxon>Pseudomonadati</taxon>
        <taxon>Pseudomonadota</taxon>
        <taxon>Gammaproteobacteria</taxon>
        <taxon>Enterobacterales</taxon>
        <taxon>Enterobacteriaceae</taxon>
        <taxon>Escherichia</taxon>
    </lineage>
</organism>